<organism>
    <name type="scientific">Shewanella oneidensis (strain ATCC 700550 / JCM 31522 / CIP 106686 / LMG 19005 / NCIMB 14063 / MR-1)</name>
    <dbReference type="NCBI Taxonomy" id="211586"/>
    <lineage>
        <taxon>Bacteria</taxon>
        <taxon>Pseudomonadati</taxon>
        <taxon>Pseudomonadota</taxon>
        <taxon>Gammaproteobacteria</taxon>
        <taxon>Alteromonadales</taxon>
        <taxon>Shewanellaceae</taxon>
        <taxon>Shewanella</taxon>
    </lineage>
</organism>
<feature type="chain" id="PRO_0000140777" description="3-dehydroquinate synthase">
    <location>
        <begin position="1"/>
        <end position="359"/>
    </location>
</feature>
<feature type="binding site" evidence="1">
    <location>
        <begin position="71"/>
        <end position="76"/>
    </location>
    <ligand>
        <name>NAD(+)</name>
        <dbReference type="ChEBI" id="CHEBI:57540"/>
    </ligand>
</feature>
<feature type="binding site" evidence="1">
    <location>
        <begin position="105"/>
        <end position="109"/>
    </location>
    <ligand>
        <name>NAD(+)</name>
        <dbReference type="ChEBI" id="CHEBI:57540"/>
    </ligand>
</feature>
<feature type="binding site" evidence="1">
    <location>
        <begin position="129"/>
        <end position="130"/>
    </location>
    <ligand>
        <name>NAD(+)</name>
        <dbReference type="ChEBI" id="CHEBI:57540"/>
    </ligand>
</feature>
<feature type="binding site" evidence="1">
    <location>
        <position position="142"/>
    </location>
    <ligand>
        <name>NAD(+)</name>
        <dbReference type="ChEBI" id="CHEBI:57540"/>
    </ligand>
</feature>
<feature type="binding site" evidence="1">
    <location>
        <position position="151"/>
    </location>
    <ligand>
        <name>NAD(+)</name>
        <dbReference type="ChEBI" id="CHEBI:57540"/>
    </ligand>
</feature>
<feature type="binding site" evidence="1">
    <location>
        <begin position="169"/>
        <end position="172"/>
    </location>
    <ligand>
        <name>NAD(+)</name>
        <dbReference type="ChEBI" id="CHEBI:57540"/>
    </ligand>
</feature>
<feature type="binding site" evidence="1">
    <location>
        <position position="184"/>
    </location>
    <ligand>
        <name>Zn(2+)</name>
        <dbReference type="ChEBI" id="CHEBI:29105"/>
    </ligand>
</feature>
<feature type="binding site" evidence="1">
    <location>
        <position position="247"/>
    </location>
    <ligand>
        <name>Zn(2+)</name>
        <dbReference type="ChEBI" id="CHEBI:29105"/>
    </ligand>
</feature>
<feature type="binding site" evidence="1">
    <location>
        <position position="264"/>
    </location>
    <ligand>
        <name>Zn(2+)</name>
        <dbReference type="ChEBI" id="CHEBI:29105"/>
    </ligand>
</feature>
<name>AROB_SHEON</name>
<evidence type="ECO:0000255" key="1">
    <source>
        <dbReference type="HAMAP-Rule" id="MF_00110"/>
    </source>
</evidence>
<proteinExistence type="inferred from homology"/>
<accession>Q8EK19</accession>
<protein>
    <recommendedName>
        <fullName evidence="1">3-dehydroquinate synthase</fullName>
        <shortName evidence="1">DHQS</shortName>
        <ecNumber evidence="1">4.2.3.4</ecNumber>
    </recommendedName>
</protein>
<sequence>MAQQIQVDLGERSYPIYIGQSLMSDSETLSRYLLKKRILIVTNETVAPLYLKQVQDTMASFGEISSVILSDGEQFKDLTHLDSIFTALLQRNYGRDSVLVALGGGVIGDMTGFAAACYQRGIDFIQIPTTLLSQVDSSVGGKTAVNHPLGKNMIGAFYQPQIVIIDTECLQTLPAREFAAGMAEVIKYGIMWDADFFQWLENNVQALKSLDTQALVYAISRCCEIKADVVSQDETEQGVRALLNLGHTFGHAIEAEMGYGNWLHGEAVAAGTVLAAQTAKSLGLIDESIVCRIVQLLQAFDLPVKAPESMDFESFIQHMRRDKKVLGGQIRLVLPTAIGRAEVFSQVPESTLEQVICCA</sequence>
<gene>
    <name evidence="1" type="primary">aroB</name>
    <name type="ordered locus">SO_0287</name>
</gene>
<reference key="1">
    <citation type="journal article" date="2002" name="Nat. Biotechnol.">
        <title>Genome sequence of the dissimilatory metal ion-reducing bacterium Shewanella oneidensis.</title>
        <authorList>
            <person name="Heidelberg J.F."/>
            <person name="Paulsen I.T."/>
            <person name="Nelson K.E."/>
            <person name="Gaidos E.J."/>
            <person name="Nelson W.C."/>
            <person name="Read T.D."/>
            <person name="Eisen J.A."/>
            <person name="Seshadri R."/>
            <person name="Ward N.L."/>
            <person name="Methe B.A."/>
            <person name="Clayton R.A."/>
            <person name="Meyer T."/>
            <person name="Tsapin A."/>
            <person name="Scott J."/>
            <person name="Beanan M.J."/>
            <person name="Brinkac L.M."/>
            <person name="Daugherty S.C."/>
            <person name="DeBoy R.T."/>
            <person name="Dodson R.J."/>
            <person name="Durkin A.S."/>
            <person name="Haft D.H."/>
            <person name="Kolonay J.F."/>
            <person name="Madupu R."/>
            <person name="Peterson J.D."/>
            <person name="Umayam L.A."/>
            <person name="White O."/>
            <person name="Wolf A.M."/>
            <person name="Vamathevan J.J."/>
            <person name="Weidman J.F."/>
            <person name="Impraim M."/>
            <person name="Lee K."/>
            <person name="Berry K.J."/>
            <person name="Lee C."/>
            <person name="Mueller J."/>
            <person name="Khouri H.M."/>
            <person name="Gill J."/>
            <person name="Utterback T.R."/>
            <person name="McDonald L.A."/>
            <person name="Feldblyum T.V."/>
            <person name="Smith H.O."/>
            <person name="Venter J.C."/>
            <person name="Nealson K.H."/>
            <person name="Fraser C.M."/>
        </authorList>
    </citation>
    <scope>NUCLEOTIDE SEQUENCE [LARGE SCALE GENOMIC DNA]</scope>
    <source>
        <strain>ATCC 700550 / JCM 31522 / CIP 106686 / LMG 19005 / NCIMB 14063 / MR-1</strain>
    </source>
</reference>
<keyword id="KW-0028">Amino-acid biosynthesis</keyword>
<keyword id="KW-0057">Aromatic amino acid biosynthesis</keyword>
<keyword id="KW-0170">Cobalt</keyword>
<keyword id="KW-0963">Cytoplasm</keyword>
<keyword id="KW-0456">Lyase</keyword>
<keyword id="KW-0479">Metal-binding</keyword>
<keyword id="KW-0520">NAD</keyword>
<keyword id="KW-0547">Nucleotide-binding</keyword>
<keyword id="KW-1185">Reference proteome</keyword>
<keyword id="KW-0862">Zinc</keyword>
<dbReference type="EC" id="4.2.3.4" evidence="1"/>
<dbReference type="EMBL" id="AE014299">
    <property type="protein sequence ID" value="AAN53372.1"/>
    <property type="molecule type" value="Genomic_DNA"/>
</dbReference>
<dbReference type="RefSeq" id="NP_715927.1">
    <property type="nucleotide sequence ID" value="NC_004347.2"/>
</dbReference>
<dbReference type="RefSeq" id="WP_011070659.1">
    <property type="nucleotide sequence ID" value="NC_004347.2"/>
</dbReference>
<dbReference type="SMR" id="Q8EK19"/>
<dbReference type="STRING" id="211586.SO_0287"/>
<dbReference type="PaxDb" id="211586-SO_0287"/>
<dbReference type="KEGG" id="son:SO_0287"/>
<dbReference type="PATRIC" id="fig|211586.12.peg.279"/>
<dbReference type="eggNOG" id="COG0337">
    <property type="taxonomic scope" value="Bacteria"/>
</dbReference>
<dbReference type="HOGENOM" id="CLU_001201_0_2_6"/>
<dbReference type="OrthoDB" id="9806583at2"/>
<dbReference type="PhylomeDB" id="Q8EK19"/>
<dbReference type="BioCyc" id="SONE211586:G1GMP-277-MONOMER"/>
<dbReference type="UniPathway" id="UPA00053">
    <property type="reaction ID" value="UER00085"/>
</dbReference>
<dbReference type="Proteomes" id="UP000008186">
    <property type="component" value="Chromosome"/>
</dbReference>
<dbReference type="GO" id="GO:0005737">
    <property type="term" value="C:cytoplasm"/>
    <property type="evidence" value="ECO:0007669"/>
    <property type="project" value="UniProtKB-SubCell"/>
</dbReference>
<dbReference type="GO" id="GO:0003856">
    <property type="term" value="F:3-dehydroquinate synthase activity"/>
    <property type="evidence" value="ECO:0000318"/>
    <property type="project" value="GO_Central"/>
</dbReference>
<dbReference type="GO" id="GO:0046872">
    <property type="term" value="F:metal ion binding"/>
    <property type="evidence" value="ECO:0007669"/>
    <property type="project" value="UniProtKB-KW"/>
</dbReference>
<dbReference type="GO" id="GO:0000166">
    <property type="term" value="F:nucleotide binding"/>
    <property type="evidence" value="ECO:0007669"/>
    <property type="project" value="UniProtKB-KW"/>
</dbReference>
<dbReference type="GO" id="GO:0008652">
    <property type="term" value="P:amino acid biosynthetic process"/>
    <property type="evidence" value="ECO:0007669"/>
    <property type="project" value="UniProtKB-KW"/>
</dbReference>
<dbReference type="GO" id="GO:0009073">
    <property type="term" value="P:aromatic amino acid family biosynthetic process"/>
    <property type="evidence" value="ECO:0000318"/>
    <property type="project" value="GO_Central"/>
</dbReference>
<dbReference type="GO" id="GO:0009423">
    <property type="term" value="P:chorismate biosynthetic process"/>
    <property type="evidence" value="ECO:0007669"/>
    <property type="project" value="UniProtKB-UniRule"/>
</dbReference>
<dbReference type="CDD" id="cd08195">
    <property type="entry name" value="DHQS"/>
    <property type="match status" value="1"/>
</dbReference>
<dbReference type="FunFam" id="1.20.1090.10:FF:000002">
    <property type="entry name" value="3-dehydroquinate synthase"/>
    <property type="match status" value="1"/>
</dbReference>
<dbReference type="FunFam" id="3.40.50.1970:FF:000001">
    <property type="entry name" value="3-dehydroquinate synthase"/>
    <property type="match status" value="1"/>
</dbReference>
<dbReference type="Gene3D" id="3.40.50.1970">
    <property type="match status" value="1"/>
</dbReference>
<dbReference type="Gene3D" id="1.20.1090.10">
    <property type="entry name" value="Dehydroquinate synthase-like - alpha domain"/>
    <property type="match status" value="1"/>
</dbReference>
<dbReference type="HAMAP" id="MF_00110">
    <property type="entry name" value="DHQ_synthase"/>
    <property type="match status" value="1"/>
</dbReference>
<dbReference type="InterPro" id="IPR050071">
    <property type="entry name" value="Dehydroquinate_synthase"/>
</dbReference>
<dbReference type="InterPro" id="IPR016037">
    <property type="entry name" value="DHQ_synth_AroB"/>
</dbReference>
<dbReference type="InterPro" id="IPR030963">
    <property type="entry name" value="DHQ_synth_fam"/>
</dbReference>
<dbReference type="InterPro" id="IPR030960">
    <property type="entry name" value="DHQS/DOIS_N"/>
</dbReference>
<dbReference type="InterPro" id="IPR056179">
    <property type="entry name" value="DHQS_C"/>
</dbReference>
<dbReference type="NCBIfam" id="TIGR01357">
    <property type="entry name" value="aroB"/>
    <property type="match status" value="1"/>
</dbReference>
<dbReference type="PANTHER" id="PTHR43622">
    <property type="entry name" value="3-DEHYDROQUINATE SYNTHASE"/>
    <property type="match status" value="1"/>
</dbReference>
<dbReference type="PANTHER" id="PTHR43622:SF7">
    <property type="entry name" value="3-DEHYDROQUINATE SYNTHASE, CHLOROPLASTIC"/>
    <property type="match status" value="1"/>
</dbReference>
<dbReference type="Pfam" id="PF01761">
    <property type="entry name" value="DHQ_synthase"/>
    <property type="match status" value="1"/>
</dbReference>
<dbReference type="Pfam" id="PF24621">
    <property type="entry name" value="DHQS_C"/>
    <property type="match status" value="1"/>
</dbReference>
<dbReference type="PIRSF" id="PIRSF001455">
    <property type="entry name" value="DHQ_synth"/>
    <property type="match status" value="1"/>
</dbReference>
<dbReference type="SUPFAM" id="SSF56796">
    <property type="entry name" value="Dehydroquinate synthase-like"/>
    <property type="match status" value="1"/>
</dbReference>
<comment type="function">
    <text evidence="1">Catalyzes the conversion of 3-deoxy-D-arabino-heptulosonate 7-phosphate (DAHP) to dehydroquinate (DHQ).</text>
</comment>
<comment type="catalytic activity">
    <reaction evidence="1">
        <text>7-phospho-2-dehydro-3-deoxy-D-arabino-heptonate = 3-dehydroquinate + phosphate</text>
        <dbReference type="Rhea" id="RHEA:21968"/>
        <dbReference type="ChEBI" id="CHEBI:32364"/>
        <dbReference type="ChEBI" id="CHEBI:43474"/>
        <dbReference type="ChEBI" id="CHEBI:58394"/>
        <dbReference type="EC" id="4.2.3.4"/>
    </reaction>
</comment>
<comment type="cofactor">
    <cofactor evidence="1">
        <name>NAD(+)</name>
        <dbReference type="ChEBI" id="CHEBI:57540"/>
    </cofactor>
</comment>
<comment type="cofactor">
    <cofactor evidence="1">
        <name>Co(2+)</name>
        <dbReference type="ChEBI" id="CHEBI:48828"/>
    </cofactor>
    <cofactor evidence="1">
        <name>Zn(2+)</name>
        <dbReference type="ChEBI" id="CHEBI:29105"/>
    </cofactor>
    <text evidence="1">Binds 1 divalent metal cation per subunit. Can use either Co(2+) or Zn(2+).</text>
</comment>
<comment type="pathway">
    <text evidence="1">Metabolic intermediate biosynthesis; chorismate biosynthesis; chorismate from D-erythrose 4-phosphate and phosphoenolpyruvate: step 2/7.</text>
</comment>
<comment type="subcellular location">
    <subcellularLocation>
        <location evidence="1">Cytoplasm</location>
    </subcellularLocation>
</comment>
<comment type="similarity">
    <text evidence="1">Belongs to the sugar phosphate cyclases superfamily. Dehydroquinate synthase family.</text>
</comment>